<feature type="chain" id="PRO_0000164807" description="Gene 67 protein">
    <location>
        <begin position="1"/>
        <end position="43"/>
    </location>
</feature>
<organism>
    <name type="scientific">Mycobacterium phage L5</name>
    <name type="common">Mycobacteriophage L5</name>
    <dbReference type="NCBI Taxonomy" id="31757"/>
    <lineage>
        <taxon>Viruses</taxon>
        <taxon>Duplodnaviria</taxon>
        <taxon>Heunggongvirae</taxon>
        <taxon>Uroviricota</taxon>
        <taxon>Caudoviricetes</taxon>
        <taxon>Fromanvirus</taxon>
    </lineage>
</organism>
<sequence length="43" mass="4907">MRPSLYDQIVAILDRHDSCCGFERDDAAEELHALVIELYGPPF</sequence>
<protein>
    <recommendedName>
        <fullName>Gene 67 protein</fullName>
    </recommendedName>
    <alternativeName>
        <fullName>Gp67</fullName>
    </alternativeName>
</protein>
<keyword id="KW-1185">Reference proteome</keyword>
<accession>Q05281</accession>
<organismHost>
    <name type="scientific">Mycobacterium</name>
    <dbReference type="NCBI Taxonomy" id="1763"/>
</organismHost>
<gene>
    <name type="primary">67</name>
</gene>
<reference key="1">
    <citation type="journal article" date="1993" name="Mol. Microbiol.">
        <title>DNA sequence, structure and gene expression of mycobacteriophage L5: a phage system for mycobacterial genetics.</title>
        <authorList>
            <person name="Hatfull G.F."/>
            <person name="Sarkis G.J."/>
        </authorList>
    </citation>
    <scope>NUCLEOTIDE SEQUENCE [LARGE SCALE GENOMIC DNA]</scope>
</reference>
<dbReference type="EMBL" id="Z18946">
    <property type="protein sequence ID" value="CAA79443.1"/>
    <property type="molecule type" value="Genomic_DNA"/>
</dbReference>
<dbReference type="PIR" id="S31012">
    <property type="entry name" value="S31012"/>
</dbReference>
<dbReference type="RefSeq" id="NP_039731.1">
    <property type="nucleotide sequence ID" value="NC_001335.1"/>
</dbReference>
<dbReference type="SMR" id="Q05281"/>
<dbReference type="GeneID" id="2942984"/>
<dbReference type="KEGG" id="vg:2942984"/>
<dbReference type="OrthoDB" id="28952at10239"/>
<dbReference type="Proteomes" id="UP000002123">
    <property type="component" value="Genome"/>
</dbReference>
<proteinExistence type="predicted"/>
<name>VG67_BPML5</name>